<organism>
    <name type="scientific">Xenopus tropicalis</name>
    <name type="common">Western clawed frog</name>
    <name type="synonym">Silurana tropicalis</name>
    <dbReference type="NCBI Taxonomy" id="8364"/>
    <lineage>
        <taxon>Eukaryota</taxon>
        <taxon>Metazoa</taxon>
        <taxon>Chordata</taxon>
        <taxon>Craniata</taxon>
        <taxon>Vertebrata</taxon>
        <taxon>Euteleostomi</taxon>
        <taxon>Amphibia</taxon>
        <taxon>Batrachia</taxon>
        <taxon>Anura</taxon>
        <taxon>Pipoidea</taxon>
        <taxon>Pipidae</taxon>
        <taxon>Xenopodinae</taxon>
        <taxon>Xenopus</taxon>
        <taxon>Silurana</taxon>
    </lineage>
</organism>
<feature type="chain" id="PRO_0000281681" description="La-related protein 7">
    <location>
        <begin position="1"/>
        <end position="593"/>
    </location>
</feature>
<feature type="domain" description="HTH La-type RNA-binding" evidence="4">
    <location>
        <begin position="30"/>
        <end position="121"/>
    </location>
</feature>
<feature type="domain" description="RRM" evidence="3">
    <location>
        <begin position="127"/>
        <end position="205"/>
    </location>
</feature>
<feature type="domain" description="xRRM" evidence="5">
    <location>
        <begin position="461"/>
        <end position="574"/>
    </location>
</feature>
<feature type="region of interest" description="Disordered" evidence="6">
    <location>
        <begin position="1"/>
        <end position="28"/>
    </location>
</feature>
<feature type="region of interest" description="Disordered" evidence="6">
    <location>
        <begin position="191"/>
        <end position="363"/>
    </location>
</feature>
<feature type="compositionally biased region" description="Polar residues" evidence="6">
    <location>
        <begin position="1"/>
        <end position="11"/>
    </location>
</feature>
<feature type="compositionally biased region" description="Basic and acidic residues" evidence="6">
    <location>
        <begin position="12"/>
        <end position="24"/>
    </location>
</feature>
<feature type="compositionally biased region" description="Basic residues" evidence="6">
    <location>
        <begin position="231"/>
        <end position="240"/>
    </location>
</feature>
<feature type="compositionally biased region" description="Acidic residues" evidence="6">
    <location>
        <begin position="248"/>
        <end position="259"/>
    </location>
</feature>
<feature type="compositionally biased region" description="Basic and acidic residues" evidence="6">
    <location>
        <begin position="295"/>
        <end position="307"/>
    </location>
</feature>
<feature type="compositionally biased region" description="Basic and acidic residues" evidence="6">
    <location>
        <begin position="314"/>
        <end position="340"/>
    </location>
</feature>
<feature type="compositionally biased region" description="Basic and acidic residues" evidence="6">
    <location>
        <begin position="348"/>
        <end position="363"/>
    </location>
</feature>
<evidence type="ECO:0000250" key="1">
    <source>
        <dbReference type="UniProtKB" id="Q4G0J3"/>
    </source>
</evidence>
<evidence type="ECO:0000250" key="2">
    <source>
        <dbReference type="UniProtKB" id="Q7ZWE3"/>
    </source>
</evidence>
<evidence type="ECO:0000255" key="3">
    <source>
        <dbReference type="PROSITE-ProRule" id="PRU00176"/>
    </source>
</evidence>
<evidence type="ECO:0000255" key="4">
    <source>
        <dbReference type="PROSITE-ProRule" id="PRU00332"/>
    </source>
</evidence>
<evidence type="ECO:0000255" key="5">
    <source>
        <dbReference type="PROSITE-ProRule" id="PRU01288"/>
    </source>
</evidence>
<evidence type="ECO:0000256" key="6">
    <source>
        <dbReference type="SAM" id="MobiDB-lite"/>
    </source>
</evidence>
<evidence type="ECO:0000303" key="7">
    <source ref="1"/>
</evidence>
<evidence type="ECO:0000305" key="8"/>
<proteinExistence type="evidence at transcript level"/>
<protein>
    <recommendedName>
        <fullName evidence="1">La-related protein 7</fullName>
    </recommendedName>
    <alternativeName>
        <fullName evidence="1">La ribonucleoprotein domain family member 7</fullName>
    </alternativeName>
</protein>
<comment type="function">
    <text evidence="1 2">RNA-binding protein that specifically binds distinct small nuclear RNA (snRNAs) and regulates their processing and function. Specifically binds the 7SK snRNA (7SK RNA) and acts as a core component of the 7SK ribonucleoprotein (RNP) complex, thereby acting as a negative regulator of transcription elongation by RNA polymerase II. The 7SK RNP complex sequesters the positive transcription elongation factor b (P-TEFb) in a large inactive 7SK RNP complex preventing RNA polymerase II phosphorylation and subsequent transcriptional elongation (By similarity). The 7SK RNP complex also promotes snRNA gene transcription by RNA polymerase II via interaction with the little elongation complex (LEC). LARP7 specifically binds to the highly conserved 3'-terminal U-rich stretch of 7SK RNA; on stimulation, remains associated with 7SK RNA, whereas P-TEFb is released from the complex. LARP7 also acts as a regulator of mRNA splicing fidelity by promoting U6 snRNA processing. Specifically binds U6 snRNAs and associates with a subset of box C/D RNP complexes: promotes U6 snRNA 2'-O-methylation by facilitating U6 snRNA loading into box C/D RNP complexes. U6 snRNA 2'-O-methylation is required for mRNA splicing fidelity (By similarity).</text>
</comment>
<comment type="subunit">
    <text evidence="1">Core component of the 7SK RNP complex. Associates with box C/D small nucleolar ribonucleoprotein (snoRNP) complexes.</text>
</comment>
<comment type="subcellular location">
    <subcellularLocation>
        <location evidence="1">Nucleus</location>
        <location evidence="1">Nucleoplasm</location>
    </subcellularLocation>
</comment>
<comment type="domain">
    <text evidence="1">The xRRM domain binds the 3' end of 7SK snRNA (7SK RNA) at the top of stem-loop 4.</text>
</comment>
<comment type="similarity">
    <text evidence="8">Belongs to the LARP7 family.</text>
</comment>
<name>LARP7_XENTR</name>
<accession>Q28G87</accession>
<dbReference type="EMBL" id="CR761502">
    <property type="protein sequence ID" value="CAJ83882.1"/>
    <property type="molecule type" value="mRNA"/>
</dbReference>
<dbReference type="RefSeq" id="NP_001039168.1">
    <property type="nucleotide sequence ID" value="NM_001045703.1"/>
</dbReference>
<dbReference type="SMR" id="Q28G87"/>
<dbReference type="FunCoup" id="Q28G87">
    <property type="interactions" value="2635"/>
</dbReference>
<dbReference type="STRING" id="8364.ENSXETP00000033268"/>
<dbReference type="PaxDb" id="8364-ENSXETP00000051994"/>
<dbReference type="GeneID" id="734000"/>
<dbReference type="KEGG" id="xtr:734000"/>
<dbReference type="AGR" id="Xenbase:XB-GENE-984850"/>
<dbReference type="CTD" id="51574"/>
<dbReference type="Xenbase" id="XB-GENE-984850">
    <property type="gene designation" value="larp7"/>
</dbReference>
<dbReference type="eggNOG" id="KOG0118">
    <property type="taxonomic scope" value="Eukaryota"/>
</dbReference>
<dbReference type="InParanoid" id="Q28G87"/>
<dbReference type="OMA" id="WCSLRNK"/>
<dbReference type="OrthoDB" id="439993at2759"/>
<dbReference type="Proteomes" id="UP000008143">
    <property type="component" value="Chromosome 1"/>
</dbReference>
<dbReference type="Bgee" id="ENSXETG00000024097">
    <property type="expression patterns" value="Expressed in gastrula and 12 other cell types or tissues"/>
</dbReference>
<dbReference type="GO" id="GO:0005654">
    <property type="term" value="C:nucleoplasm"/>
    <property type="evidence" value="ECO:0007669"/>
    <property type="project" value="UniProtKB-SubCell"/>
</dbReference>
<dbReference type="GO" id="GO:0005634">
    <property type="term" value="C:nucleus"/>
    <property type="evidence" value="ECO:0000250"/>
    <property type="project" value="UniProtKB"/>
</dbReference>
<dbReference type="GO" id="GO:1990904">
    <property type="term" value="C:ribonucleoprotein complex"/>
    <property type="evidence" value="ECO:0000250"/>
    <property type="project" value="UniProtKB"/>
</dbReference>
<dbReference type="GO" id="GO:0097322">
    <property type="term" value="F:7SK snRNA binding"/>
    <property type="evidence" value="ECO:0000250"/>
    <property type="project" value="UniProtKB"/>
</dbReference>
<dbReference type="GO" id="GO:0017070">
    <property type="term" value="F:U6 snRNA binding"/>
    <property type="evidence" value="ECO:0000250"/>
    <property type="project" value="UniProtKB"/>
</dbReference>
<dbReference type="GO" id="GO:0000494">
    <property type="term" value="P:box C/D sno(s)RNA 3'-end processing"/>
    <property type="evidence" value="ECO:0000250"/>
    <property type="project" value="UniProtKB"/>
</dbReference>
<dbReference type="GO" id="GO:0030154">
    <property type="term" value="P:cell differentiation"/>
    <property type="evidence" value="ECO:0007669"/>
    <property type="project" value="UniProtKB-KW"/>
</dbReference>
<dbReference type="GO" id="GO:0006397">
    <property type="term" value="P:mRNA processing"/>
    <property type="evidence" value="ECO:0007669"/>
    <property type="project" value="UniProtKB-KW"/>
</dbReference>
<dbReference type="GO" id="GO:1904871">
    <property type="term" value="P:positive regulation of protein localization to Cajal body"/>
    <property type="evidence" value="ECO:0000250"/>
    <property type="project" value="UniProtKB"/>
</dbReference>
<dbReference type="GO" id="GO:1905382">
    <property type="term" value="P:positive regulation of snRNA transcription by RNA polymerase II"/>
    <property type="evidence" value="ECO:0000250"/>
    <property type="project" value="UniProtKB"/>
</dbReference>
<dbReference type="GO" id="GO:0048024">
    <property type="term" value="P:regulation of mRNA splicing, via spliceosome"/>
    <property type="evidence" value="ECO:0000250"/>
    <property type="project" value="UniProtKB"/>
</dbReference>
<dbReference type="GO" id="GO:0008380">
    <property type="term" value="P:RNA splicing"/>
    <property type="evidence" value="ECO:0007669"/>
    <property type="project" value="UniProtKB-KW"/>
</dbReference>
<dbReference type="GO" id="GO:0007283">
    <property type="term" value="P:spermatogenesis"/>
    <property type="evidence" value="ECO:0000250"/>
    <property type="project" value="UniProtKB"/>
</dbReference>
<dbReference type="GO" id="GO:1990438">
    <property type="term" value="P:U6 2'-O-snRNA methylation"/>
    <property type="evidence" value="ECO:0000250"/>
    <property type="project" value="UniProtKB"/>
</dbReference>
<dbReference type="CDD" id="cd08032">
    <property type="entry name" value="LARP_7"/>
    <property type="match status" value="1"/>
</dbReference>
<dbReference type="CDD" id="cd12290">
    <property type="entry name" value="RRM1_LARP7"/>
    <property type="match status" value="1"/>
</dbReference>
<dbReference type="CDD" id="cd12542">
    <property type="entry name" value="RRM2_LARP7"/>
    <property type="match status" value="1"/>
</dbReference>
<dbReference type="FunFam" id="1.10.10.10:FF:000158">
    <property type="entry name" value="La ribonucleoprotein domain family member 7"/>
    <property type="match status" value="1"/>
</dbReference>
<dbReference type="Gene3D" id="3.30.70.330">
    <property type="match status" value="2"/>
</dbReference>
<dbReference type="Gene3D" id="1.10.10.10">
    <property type="entry name" value="Winged helix-like DNA-binding domain superfamily/Winged helix DNA-binding domain"/>
    <property type="match status" value="1"/>
</dbReference>
<dbReference type="InterPro" id="IPR045180">
    <property type="entry name" value="La_dom_prot"/>
</dbReference>
<dbReference type="InterPro" id="IPR006630">
    <property type="entry name" value="La_HTH"/>
</dbReference>
<dbReference type="InterPro" id="IPR014886">
    <property type="entry name" value="La_xRRM"/>
</dbReference>
<dbReference type="InterPro" id="IPR034946">
    <property type="entry name" value="LARP7_La"/>
</dbReference>
<dbReference type="InterPro" id="IPR034887">
    <property type="entry name" value="LARP7_RRM1"/>
</dbReference>
<dbReference type="InterPro" id="IPR034910">
    <property type="entry name" value="LARP7_RRM2"/>
</dbReference>
<dbReference type="InterPro" id="IPR002344">
    <property type="entry name" value="Lupus_La"/>
</dbReference>
<dbReference type="InterPro" id="IPR012677">
    <property type="entry name" value="Nucleotide-bd_a/b_plait_sf"/>
</dbReference>
<dbReference type="InterPro" id="IPR035979">
    <property type="entry name" value="RBD_domain_sf"/>
</dbReference>
<dbReference type="InterPro" id="IPR000504">
    <property type="entry name" value="RRM_dom"/>
</dbReference>
<dbReference type="InterPro" id="IPR036388">
    <property type="entry name" value="WH-like_DNA-bd_sf"/>
</dbReference>
<dbReference type="InterPro" id="IPR036390">
    <property type="entry name" value="WH_DNA-bd_sf"/>
</dbReference>
<dbReference type="PANTHER" id="PTHR22792:SF62">
    <property type="entry name" value="LA-RELATED PROTEIN 7"/>
    <property type="match status" value="1"/>
</dbReference>
<dbReference type="PANTHER" id="PTHR22792">
    <property type="entry name" value="LUPUS LA PROTEIN-RELATED"/>
    <property type="match status" value="1"/>
</dbReference>
<dbReference type="Pfam" id="PF05383">
    <property type="entry name" value="La"/>
    <property type="match status" value="1"/>
</dbReference>
<dbReference type="Pfam" id="PF00076">
    <property type="entry name" value="RRM_1"/>
    <property type="match status" value="1"/>
</dbReference>
<dbReference type="Pfam" id="PF08777">
    <property type="entry name" value="RRM_3"/>
    <property type="match status" value="1"/>
</dbReference>
<dbReference type="PRINTS" id="PR00302">
    <property type="entry name" value="LUPUSLA"/>
</dbReference>
<dbReference type="SMART" id="SM00715">
    <property type="entry name" value="LA"/>
    <property type="match status" value="1"/>
</dbReference>
<dbReference type="SMART" id="SM00360">
    <property type="entry name" value="RRM"/>
    <property type="match status" value="1"/>
</dbReference>
<dbReference type="SUPFAM" id="SSF54928">
    <property type="entry name" value="RNA-binding domain, RBD"/>
    <property type="match status" value="1"/>
</dbReference>
<dbReference type="SUPFAM" id="SSF46785">
    <property type="entry name" value="Winged helix' DNA-binding domain"/>
    <property type="match status" value="1"/>
</dbReference>
<dbReference type="PROSITE" id="PS50961">
    <property type="entry name" value="HTH_LA"/>
    <property type="match status" value="1"/>
</dbReference>
<dbReference type="PROSITE" id="PS50102">
    <property type="entry name" value="RRM"/>
    <property type="match status" value="1"/>
</dbReference>
<dbReference type="PROSITE" id="PS51939">
    <property type="entry name" value="XRRM"/>
    <property type="match status" value="1"/>
</dbReference>
<gene>
    <name evidence="1" type="primary">larp7</name>
    <name evidence="7" type="ORF">TGas080c15.1</name>
</gene>
<reference key="1">
    <citation type="submission" date="2006-10" db="EMBL/GenBank/DDBJ databases">
        <authorList>
            <consortium name="Sanger Xenopus tropicalis EST/cDNA project"/>
        </authorList>
    </citation>
    <scope>NUCLEOTIDE SEQUENCE [LARGE SCALE MRNA]</scope>
    <source>
        <tissue>Gastrula</tissue>
    </source>
</reference>
<sequence>MTAIETDTPSNKVKEDESTDLRKDREKKKRSRVKQLLADIAKQVDFWFGDVNLHKDRFLREQIEKTRDGYIDISLLASFNKMKKITTDSKLIARAVKNSSVVEINLSGTKIRRRFPLGEKPQDVDSRTVYVELLPKNVTHSWIERVFGKYGMVVYVSIPRYKSTGDPKGFAFIEFETQEQAAKAIEVLNNPPEEAPRKAGMFPKTVKNKHLPPVEVTEHSITEGCGTEEKKKKKKKKSKARKDSVEKAEEDTKEQDMDIISEGVPKRRKTVSESSVPDVQEADKQTAKKEKKKKERAESFDQSEKVRQGKRKCSSSEEHDCSSAKQKKSDTKDLPQDEKPMVTQEVLQECKELSTEEEKDAVDKKEISVPKVKRKRKKKHKERHRVGEEVIPLRVLSKTEWLVLKAEYLTLQRASMASLKKSMSEMNHISEEEMQTQPSMQSFDIKNGKVETVKNEPLGPQFVCGVIGKITSSDPLQGRKYVKDAFSGVCEVVYVDMLEGDTECHVRFKSPEDAQTAVKTRSDLQGKHNWKLQILAGDNEQRYWQKILVDRQAKLNRPREKKRGTEKLIAKAEKMRLAKTQEASKHIRFSDGF</sequence>
<keyword id="KW-0221">Differentiation</keyword>
<keyword id="KW-0507">mRNA processing</keyword>
<keyword id="KW-0508">mRNA splicing</keyword>
<keyword id="KW-0539">Nucleus</keyword>
<keyword id="KW-1185">Reference proteome</keyword>
<keyword id="KW-0694">RNA-binding</keyword>
<keyword id="KW-0744">Spermatogenesis</keyword>
<keyword id="KW-0804">Transcription</keyword>
<keyword id="KW-0805">Transcription regulation</keyword>